<reference key="1">
    <citation type="journal article" date="1996" name="Science">
        <title>Complete genome sequence of the methanogenic archaeon, Methanococcus jannaschii.</title>
        <authorList>
            <person name="Bult C.J."/>
            <person name="White O."/>
            <person name="Olsen G.J."/>
            <person name="Zhou L."/>
            <person name="Fleischmann R.D."/>
            <person name="Sutton G.G."/>
            <person name="Blake J.A."/>
            <person name="FitzGerald L.M."/>
            <person name="Clayton R.A."/>
            <person name="Gocayne J.D."/>
            <person name="Kerlavage A.R."/>
            <person name="Dougherty B.A."/>
            <person name="Tomb J.-F."/>
            <person name="Adams M.D."/>
            <person name="Reich C.I."/>
            <person name="Overbeek R."/>
            <person name="Kirkness E.F."/>
            <person name="Weinstock K.G."/>
            <person name="Merrick J.M."/>
            <person name="Glodek A."/>
            <person name="Scott J.L."/>
            <person name="Geoghagen N.S.M."/>
            <person name="Weidman J.F."/>
            <person name="Fuhrmann J.L."/>
            <person name="Nguyen D."/>
            <person name="Utterback T.R."/>
            <person name="Kelley J.M."/>
            <person name="Peterson J.D."/>
            <person name="Sadow P.W."/>
            <person name="Hanna M.C."/>
            <person name="Cotton M.D."/>
            <person name="Roberts K.M."/>
            <person name="Hurst M.A."/>
            <person name="Kaine B.P."/>
            <person name="Borodovsky M."/>
            <person name="Klenk H.-P."/>
            <person name="Fraser C.M."/>
            <person name="Smith H.O."/>
            <person name="Woese C.R."/>
            <person name="Venter J.C."/>
        </authorList>
    </citation>
    <scope>NUCLEOTIDE SEQUENCE [LARGE SCALE GENOMIC DNA]</scope>
    <source>
        <strain>ATCC 43067 / DSM 2661 / JAL-1 / JCM 10045 / NBRC 100440</strain>
    </source>
</reference>
<keyword id="KW-1185">Reference proteome</keyword>
<dbReference type="EMBL" id="L77117">
    <property type="protein sequence ID" value="AAB99367.1"/>
    <property type="molecule type" value="Genomic_DNA"/>
</dbReference>
<dbReference type="PIR" id="C64469">
    <property type="entry name" value="C64469"/>
</dbReference>
<dbReference type="RefSeq" id="WP_010870873.1">
    <property type="nucleotide sequence ID" value="NC_000909.1"/>
</dbReference>
<dbReference type="SMR" id="Q58751"/>
<dbReference type="STRING" id="243232.MJ_1356"/>
<dbReference type="PaxDb" id="243232-MJ_1356"/>
<dbReference type="EnsemblBacteria" id="AAB99367">
    <property type="protein sequence ID" value="AAB99367"/>
    <property type="gene ID" value="MJ_1356"/>
</dbReference>
<dbReference type="GeneID" id="1452258"/>
<dbReference type="KEGG" id="mja:MJ_1356"/>
<dbReference type="eggNOG" id="arCOG09681">
    <property type="taxonomic scope" value="Archaea"/>
</dbReference>
<dbReference type="HOGENOM" id="CLU_1431639_0_0_2"/>
<dbReference type="InParanoid" id="Q58751"/>
<dbReference type="OrthoDB" id="65226at2157"/>
<dbReference type="Proteomes" id="UP000000805">
    <property type="component" value="Chromosome"/>
</dbReference>
<dbReference type="GO" id="GO:0020037">
    <property type="term" value="F:heme binding"/>
    <property type="evidence" value="ECO:0007669"/>
    <property type="project" value="InterPro"/>
</dbReference>
<dbReference type="GO" id="GO:0019825">
    <property type="term" value="F:oxygen binding"/>
    <property type="evidence" value="ECO:0007669"/>
    <property type="project" value="InterPro"/>
</dbReference>
<dbReference type="Gene3D" id="1.10.490.10">
    <property type="entry name" value="Globins"/>
    <property type="match status" value="1"/>
</dbReference>
<dbReference type="InterPro" id="IPR044398">
    <property type="entry name" value="Globin-sensor_dom"/>
</dbReference>
<dbReference type="InterPro" id="IPR012292">
    <property type="entry name" value="Globin/Proto"/>
</dbReference>
<dbReference type="Pfam" id="PF11563">
    <property type="entry name" value="Protoglobin"/>
    <property type="match status" value="1"/>
</dbReference>
<feature type="chain" id="PRO_0000107295" description="Uncharacterized protein MJ1356">
    <location>
        <begin position="1"/>
        <end position="189"/>
    </location>
</feature>
<comment type="similarity">
    <text evidence="1">To M.jannaschii MJ1461.</text>
</comment>
<gene>
    <name type="ordered locus">MJ1356</name>
</gene>
<name>Y1356_METJA</name>
<accession>Q58751</accession>
<proteinExistence type="predicted"/>
<protein>
    <recommendedName>
        <fullName>Uncharacterized protein MJ1356</fullName>
    </recommendedName>
</protein>
<organism>
    <name type="scientific">Methanocaldococcus jannaschii (strain ATCC 43067 / DSM 2661 / JAL-1 / JCM 10045 / NBRC 100440)</name>
    <name type="common">Methanococcus jannaschii</name>
    <dbReference type="NCBI Taxonomy" id="243232"/>
    <lineage>
        <taxon>Archaea</taxon>
        <taxon>Methanobacteriati</taxon>
        <taxon>Methanobacteriota</taxon>
        <taxon>Methanomada group</taxon>
        <taxon>Methanococci</taxon>
        <taxon>Methanococcales</taxon>
        <taxon>Methanocaldococcaceae</taxon>
        <taxon>Methanocaldococcus</taxon>
    </lineage>
</organism>
<sequence length="189" mass="22350">MNVTFDGIYNEIIENMHHFASEEKDFSKLTQYKDLISKTIDEVVEEVFNDIFSYEKTKTLFDESKRKELEEDFKNWIKGLFEISNDSDLNEFYKEIVKRGIKYVEKDFLPEYLTAIIIKIEDRLKNKLKEELKEDAQEIVDILDDLLKRVILLNVAAYMNFESKVLDYIGINQNLKKNAVKLGIKKMGL</sequence>
<evidence type="ECO:0000305" key="1"/>